<organism>
    <name type="scientific">Homo sapiens</name>
    <name type="common">Human</name>
    <dbReference type="NCBI Taxonomy" id="9606"/>
    <lineage>
        <taxon>Eukaryota</taxon>
        <taxon>Metazoa</taxon>
        <taxon>Chordata</taxon>
        <taxon>Craniata</taxon>
        <taxon>Vertebrata</taxon>
        <taxon>Euteleostomi</taxon>
        <taxon>Mammalia</taxon>
        <taxon>Eutheria</taxon>
        <taxon>Euarchontoglires</taxon>
        <taxon>Primates</taxon>
        <taxon>Haplorrhini</taxon>
        <taxon>Catarrhini</taxon>
        <taxon>Hominidae</taxon>
        <taxon>Homo</taxon>
    </lineage>
</organism>
<reference key="1">
    <citation type="journal article" date="2004" name="Nat. Genet.">
        <title>Complete sequencing and characterization of 21,243 full-length human cDNAs.</title>
        <authorList>
            <person name="Ota T."/>
            <person name="Suzuki Y."/>
            <person name="Nishikawa T."/>
            <person name="Otsuki T."/>
            <person name="Sugiyama T."/>
            <person name="Irie R."/>
            <person name="Wakamatsu A."/>
            <person name="Hayashi K."/>
            <person name="Sato H."/>
            <person name="Nagai K."/>
            <person name="Kimura K."/>
            <person name="Makita H."/>
            <person name="Sekine M."/>
            <person name="Obayashi M."/>
            <person name="Nishi T."/>
            <person name="Shibahara T."/>
            <person name="Tanaka T."/>
            <person name="Ishii S."/>
            <person name="Yamamoto J."/>
            <person name="Saito K."/>
            <person name="Kawai Y."/>
            <person name="Isono Y."/>
            <person name="Nakamura Y."/>
            <person name="Nagahari K."/>
            <person name="Murakami K."/>
            <person name="Yasuda T."/>
            <person name="Iwayanagi T."/>
            <person name="Wagatsuma M."/>
            <person name="Shiratori A."/>
            <person name="Sudo H."/>
            <person name="Hosoiri T."/>
            <person name="Kaku Y."/>
            <person name="Kodaira H."/>
            <person name="Kondo H."/>
            <person name="Sugawara M."/>
            <person name="Takahashi M."/>
            <person name="Kanda K."/>
            <person name="Yokoi T."/>
            <person name="Furuya T."/>
            <person name="Kikkawa E."/>
            <person name="Omura Y."/>
            <person name="Abe K."/>
            <person name="Kamihara K."/>
            <person name="Katsuta N."/>
            <person name="Sato K."/>
            <person name="Tanikawa M."/>
            <person name="Yamazaki M."/>
            <person name="Ninomiya K."/>
            <person name="Ishibashi T."/>
            <person name="Yamashita H."/>
            <person name="Murakawa K."/>
            <person name="Fujimori K."/>
            <person name="Tanai H."/>
            <person name="Kimata M."/>
            <person name="Watanabe M."/>
            <person name="Hiraoka S."/>
            <person name="Chiba Y."/>
            <person name="Ishida S."/>
            <person name="Ono Y."/>
            <person name="Takiguchi S."/>
            <person name="Watanabe S."/>
            <person name="Yosida M."/>
            <person name="Hotuta T."/>
            <person name="Kusano J."/>
            <person name="Kanehori K."/>
            <person name="Takahashi-Fujii A."/>
            <person name="Hara H."/>
            <person name="Tanase T.-O."/>
            <person name="Nomura Y."/>
            <person name="Togiya S."/>
            <person name="Komai F."/>
            <person name="Hara R."/>
            <person name="Takeuchi K."/>
            <person name="Arita M."/>
            <person name="Imose N."/>
            <person name="Musashino K."/>
            <person name="Yuuki H."/>
            <person name="Oshima A."/>
            <person name="Sasaki N."/>
            <person name="Aotsuka S."/>
            <person name="Yoshikawa Y."/>
            <person name="Matsunawa H."/>
            <person name="Ichihara T."/>
            <person name="Shiohata N."/>
            <person name="Sano S."/>
            <person name="Moriya S."/>
            <person name="Momiyama H."/>
            <person name="Satoh N."/>
            <person name="Takami S."/>
            <person name="Terashima Y."/>
            <person name="Suzuki O."/>
            <person name="Nakagawa S."/>
            <person name="Senoh A."/>
            <person name="Mizoguchi H."/>
            <person name="Goto Y."/>
            <person name="Shimizu F."/>
            <person name="Wakebe H."/>
            <person name="Hishigaki H."/>
            <person name="Watanabe T."/>
            <person name="Sugiyama A."/>
            <person name="Takemoto M."/>
            <person name="Kawakami B."/>
            <person name="Yamazaki M."/>
            <person name="Watanabe K."/>
            <person name="Kumagai A."/>
            <person name="Itakura S."/>
            <person name="Fukuzumi Y."/>
            <person name="Fujimori Y."/>
            <person name="Komiyama M."/>
            <person name="Tashiro H."/>
            <person name="Tanigami A."/>
            <person name="Fujiwara T."/>
            <person name="Ono T."/>
            <person name="Yamada K."/>
            <person name="Fujii Y."/>
            <person name="Ozaki K."/>
            <person name="Hirao M."/>
            <person name="Ohmori Y."/>
            <person name="Kawabata A."/>
            <person name="Hikiji T."/>
            <person name="Kobatake N."/>
            <person name="Inagaki H."/>
            <person name="Ikema Y."/>
            <person name="Okamoto S."/>
            <person name="Okitani R."/>
            <person name="Kawakami T."/>
            <person name="Noguchi S."/>
            <person name="Itoh T."/>
            <person name="Shigeta K."/>
            <person name="Senba T."/>
            <person name="Matsumura K."/>
            <person name="Nakajima Y."/>
            <person name="Mizuno T."/>
            <person name="Morinaga M."/>
            <person name="Sasaki M."/>
            <person name="Togashi T."/>
            <person name="Oyama M."/>
            <person name="Hata H."/>
            <person name="Watanabe M."/>
            <person name="Komatsu T."/>
            <person name="Mizushima-Sugano J."/>
            <person name="Satoh T."/>
            <person name="Shirai Y."/>
            <person name="Takahashi Y."/>
            <person name="Nakagawa K."/>
            <person name="Okumura K."/>
            <person name="Nagase T."/>
            <person name="Nomura N."/>
            <person name="Kikuchi H."/>
            <person name="Masuho Y."/>
            <person name="Yamashita R."/>
            <person name="Nakai K."/>
            <person name="Yada T."/>
            <person name="Nakamura Y."/>
            <person name="Ohara O."/>
            <person name="Isogai T."/>
            <person name="Sugano S."/>
        </authorList>
    </citation>
    <scope>NUCLEOTIDE SEQUENCE [LARGE SCALE MRNA] (ISOFORMS 1; 2; 3; 4 AND 5)</scope>
    <source>
        <tissue>Brain</tissue>
        <tissue>Cerebellum</tissue>
        <tissue>Colon mucosa</tissue>
        <tissue>Hippocampus</tissue>
        <tissue>Thalamus</tissue>
        <tissue>Thymus</tissue>
    </source>
</reference>
<reference key="2">
    <citation type="journal article" date="2004" name="Nature">
        <title>The sequence and analysis of duplication-rich human chromosome 16.</title>
        <authorList>
            <person name="Martin J."/>
            <person name="Han C."/>
            <person name="Gordon L.A."/>
            <person name="Terry A."/>
            <person name="Prabhakar S."/>
            <person name="She X."/>
            <person name="Xie G."/>
            <person name="Hellsten U."/>
            <person name="Chan Y.M."/>
            <person name="Altherr M."/>
            <person name="Couronne O."/>
            <person name="Aerts A."/>
            <person name="Bajorek E."/>
            <person name="Black S."/>
            <person name="Blumer H."/>
            <person name="Branscomb E."/>
            <person name="Brown N.C."/>
            <person name="Bruno W.J."/>
            <person name="Buckingham J.M."/>
            <person name="Callen D.F."/>
            <person name="Campbell C.S."/>
            <person name="Campbell M.L."/>
            <person name="Campbell E.W."/>
            <person name="Caoile C."/>
            <person name="Challacombe J.F."/>
            <person name="Chasteen L.A."/>
            <person name="Chertkov O."/>
            <person name="Chi H.C."/>
            <person name="Christensen M."/>
            <person name="Clark L.M."/>
            <person name="Cohn J.D."/>
            <person name="Denys M."/>
            <person name="Detter J.C."/>
            <person name="Dickson M."/>
            <person name="Dimitrijevic-Bussod M."/>
            <person name="Escobar J."/>
            <person name="Fawcett J.J."/>
            <person name="Flowers D."/>
            <person name="Fotopulos D."/>
            <person name="Glavina T."/>
            <person name="Gomez M."/>
            <person name="Gonzales E."/>
            <person name="Goodstein D."/>
            <person name="Goodwin L.A."/>
            <person name="Grady D.L."/>
            <person name="Grigoriev I."/>
            <person name="Groza M."/>
            <person name="Hammon N."/>
            <person name="Hawkins T."/>
            <person name="Haydu L."/>
            <person name="Hildebrand C.E."/>
            <person name="Huang W."/>
            <person name="Israni S."/>
            <person name="Jett J."/>
            <person name="Jewett P.B."/>
            <person name="Kadner K."/>
            <person name="Kimball H."/>
            <person name="Kobayashi A."/>
            <person name="Krawczyk M.-C."/>
            <person name="Leyba T."/>
            <person name="Longmire J.L."/>
            <person name="Lopez F."/>
            <person name="Lou Y."/>
            <person name="Lowry S."/>
            <person name="Ludeman T."/>
            <person name="Manohar C.F."/>
            <person name="Mark G.A."/>
            <person name="McMurray K.L."/>
            <person name="Meincke L.J."/>
            <person name="Morgan J."/>
            <person name="Moyzis R.K."/>
            <person name="Mundt M.O."/>
            <person name="Munk A.C."/>
            <person name="Nandkeshwar R.D."/>
            <person name="Pitluck S."/>
            <person name="Pollard M."/>
            <person name="Predki P."/>
            <person name="Parson-Quintana B."/>
            <person name="Ramirez L."/>
            <person name="Rash S."/>
            <person name="Retterer J."/>
            <person name="Ricke D.O."/>
            <person name="Robinson D.L."/>
            <person name="Rodriguez A."/>
            <person name="Salamov A."/>
            <person name="Saunders E.H."/>
            <person name="Scott D."/>
            <person name="Shough T."/>
            <person name="Stallings R.L."/>
            <person name="Stalvey M."/>
            <person name="Sutherland R.D."/>
            <person name="Tapia R."/>
            <person name="Tesmer J.G."/>
            <person name="Thayer N."/>
            <person name="Thompson L.S."/>
            <person name="Tice H."/>
            <person name="Torney D.C."/>
            <person name="Tran-Gyamfi M."/>
            <person name="Tsai M."/>
            <person name="Ulanovsky L.E."/>
            <person name="Ustaszewska A."/>
            <person name="Vo N."/>
            <person name="White P.S."/>
            <person name="Williams A.L."/>
            <person name="Wills P.L."/>
            <person name="Wu J.-R."/>
            <person name="Wu K."/>
            <person name="Yang J."/>
            <person name="DeJong P."/>
            <person name="Bruce D."/>
            <person name="Doggett N.A."/>
            <person name="Deaven L."/>
            <person name="Schmutz J."/>
            <person name="Grimwood J."/>
            <person name="Richardson P."/>
            <person name="Rokhsar D.S."/>
            <person name="Eichler E.E."/>
            <person name="Gilna P."/>
            <person name="Lucas S.M."/>
            <person name="Myers R.M."/>
            <person name="Rubin E.M."/>
            <person name="Pennacchio L.A."/>
        </authorList>
    </citation>
    <scope>NUCLEOTIDE SEQUENCE [LARGE SCALE GENOMIC DNA]</scope>
</reference>
<reference key="3">
    <citation type="submission" date="2005-09" db="EMBL/GenBank/DDBJ databases">
        <authorList>
            <person name="Mural R.J."/>
            <person name="Istrail S."/>
            <person name="Sutton G.G."/>
            <person name="Florea L."/>
            <person name="Halpern A.L."/>
            <person name="Mobarry C.M."/>
            <person name="Lippert R."/>
            <person name="Walenz B."/>
            <person name="Shatkay H."/>
            <person name="Dew I."/>
            <person name="Miller J.R."/>
            <person name="Flanigan M.J."/>
            <person name="Edwards N.J."/>
            <person name="Bolanos R."/>
            <person name="Fasulo D."/>
            <person name="Halldorsson B.V."/>
            <person name="Hannenhalli S."/>
            <person name="Turner R."/>
            <person name="Yooseph S."/>
            <person name="Lu F."/>
            <person name="Nusskern D.R."/>
            <person name="Shue B.C."/>
            <person name="Zheng X.H."/>
            <person name="Zhong F."/>
            <person name="Delcher A.L."/>
            <person name="Huson D.H."/>
            <person name="Kravitz S.A."/>
            <person name="Mouchard L."/>
            <person name="Reinert K."/>
            <person name="Remington K.A."/>
            <person name="Clark A.G."/>
            <person name="Waterman M.S."/>
            <person name="Eichler E.E."/>
            <person name="Adams M.D."/>
            <person name="Hunkapiller M.W."/>
            <person name="Myers E.W."/>
            <person name="Venter J.C."/>
        </authorList>
    </citation>
    <scope>NUCLEOTIDE SEQUENCE [LARGE SCALE GENOMIC DNA]</scope>
</reference>
<reference key="4">
    <citation type="journal article" date="2004" name="Genome Res.">
        <title>The status, quality, and expansion of the NIH full-length cDNA project: the Mammalian Gene Collection (MGC).</title>
        <authorList>
            <consortium name="The MGC Project Team"/>
        </authorList>
    </citation>
    <scope>NUCLEOTIDE SEQUENCE [LARGE SCALE MRNA] (ISOFORM 2)</scope>
    <source>
        <tissue>Pancreas</tissue>
        <tissue>Skin</tissue>
    </source>
</reference>
<reference key="5">
    <citation type="journal article" date="2012" name="Proc. Natl. Acad. Sci. U.S.A.">
        <title>N-terminal acetylome analyses and functional insights of the N-terminal acetyltransferase NatB.</title>
        <authorList>
            <person name="Van Damme P."/>
            <person name="Lasa M."/>
            <person name="Polevoda B."/>
            <person name="Gazquez C."/>
            <person name="Elosegui-Artola A."/>
            <person name="Kim D.S."/>
            <person name="De Juan-Pardo E."/>
            <person name="Demeyer K."/>
            <person name="Hole K."/>
            <person name="Larrea E."/>
            <person name="Timmerman E."/>
            <person name="Prieto J."/>
            <person name="Arnesen T."/>
            <person name="Sherman F."/>
            <person name="Gevaert K."/>
            <person name="Aldabe R."/>
        </authorList>
    </citation>
    <scope>ACETYLATION [LARGE SCALE ANALYSIS] AT MET-1 (ISOFORMS 2; 3; 5 AND 6)</scope>
    <scope>IDENTIFICATION BY MASS SPECTROMETRY [LARGE SCALE ANALYSIS]</scope>
</reference>
<sequence>MAILSLRAPGPWQAMQVWADRTLLTPHTGVTSQVLGVAAAVMTPLPGGHAAGRTREARWDAMEYDEKLARFRQAHLNPFNKQSGPRQHEQGPGEEVPDVTPEEALPELPPGEPEFRCPERVMDLGLSEDHFSRPVGLFLASDVQQLRQAIEECKQVILELPEQSEKQKDAVVRLIHLRLKLQELKDPNEDEPNIRVLLEHRFYKEKSKSVKQTCDKCNTIIWGLIQTWYTCTGCYYRCHSKCLNLISKPCVSSKVSHQAEYELNICPETGLDSQDYRCAECRAPISLRGVPSEARQCDYTGQYYCSHCHWNDLAVIPARVVHNWDFEPRKVSRCSMRYLALMVSRPVLRLREINPLLFSYVEELVEIRKLRQDILLMKPYFITCREAMEARLLLQLQDRQHFVENDEMYSVQDLLDVHAGRLGCSLTEIHTLFAKHIKLDCERCQAKGFVCELCREGDVLFPFDSHTSVCADCSAVFHRDCYYDNSTTCPKCARLSLRKQSLFQEPGPDVEA</sequence>
<protein>
    <recommendedName>
        <fullName>Differentially expressed in FDCP 8 homolog</fullName>
        <shortName>DEF-8</shortName>
    </recommendedName>
</protein>
<accession>Q6ZN54</accession>
<accession>B3KT65</accession>
<accession>B4DK62</accession>
<accession>B4E0S9</accession>
<accession>B7Z3H6</accession>
<accession>H3BUG7</accession>
<accession>Q8N8N3</accession>
<accession>Q9NXL0</accession>
<gene>
    <name type="primary">DEF8</name>
</gene>
<keyword id="KW-0007">Acetylation</keyword>
<keyword id="KW-0025">Alternative splicing</keyword>
<keyword id="KW-0479">Metal-binding</keyword>
<keyword id="KW-0597">Phosphoprotein</keyword>
<keyword id="KW-1267">Proteomics identification</keyword>
<keyword id="KW-1185">Reference proteome</keyword>
<keyword id="KW-0677">Repeat</keyword>
<keyword id="KW-0862">Zinc</keyword>
<keyword id="KW-0863">Zinc-finger</keyword>
<dbReference type="EMBL" id="AK000193">
    <property type="protein sequence ID" value="BAA91000.1"/>
    <property type="molecule type" value="mRNA"/>
</dbReference>
<dbReference type="EMBL" id="AK095051">
    <property type="protein sequence ID" value="BAG52977.1"/>
    <property type="molecule type" value="mRNA"/>
</dbReference>
<dbReference type="EMBL" id="AK096485">
    <property type="protein sequence ID" value="BAC04802.1"/>
    <property type="status" value="ALT_SEQ"/>
    <property type="molecule type" value="mRNA"/>
</dbReference>
<dbReference type="EMBL" id="AK131370">
    <property type="protein sequence ID" value="BAD18521.1"/>
    <property type="molecule type" value="mRNA"/>
</dbReference>
<dbReference type="EMBL" id="AK295880">
    <property type="protein sequence ID" value="BAH12212.1"/>
    <property type="molecule type" value="mRNA"/>
</dbReference>
<dbReference type="EMBL" id="AK296410">
    <property type="protein sequence ID" value="BAG59074.1"/>
    <property type="molecule type" value="mRNA"/>
</dbReference>
<dbReference type="EMBL" id="AK303510">
    <property type="protein sequence ID" value="BAG64541.1"/>
    <property type="status" value="ALT_SEQ"/>
    <property type="molecule type" value="mRNA"/>
</dbReference>
<dbReference type="EMBL" id="AC092143">
    <property type="status" value="NOT_ANNOTATED_CDS"/>
    <property type="molecule type" value="Genomic_DNA"/>
</dbReference>
<dbReference type="EMBL" id="CH471184">
    <property type="protein sequence ID" value="EAW66667.1"/>
    <property type="molecule type" value="Genomic_DNA"/>
</dbReference>
<dbReference type="EMBL" id="BC015482">
    <property type="protein sequence ID" value="AAH15482.1"/>
    <property type="molecule type" value="mRNA"/>
</dbReference>
<dbReference type="EMBL" id="BC105592">
    <property type="protein sequence ID" value="AAI05593.1"/>
    <property type="molecule type" value="mRNA"/>
</dbReference>
<dbReference type="CCDS" id="CCDS10989.1">
    <molecule id="Q6ZN54-1"/>
</dbReference>
<dbReference type="CCDS" id="CCDS45555.1">
    <molecule id="Q6ZN54-2"/>
</dbReference>
<dbReference type="CCDS" id="CCDS58493.1">
    <molecule id="Q6ZN54-5"/>
</dbReference>
<dbReference type="CCDS" id="CCDS58494.1">
    <molecule id="Q6ZN54-6"/>
</dbReference>
<dbReference type="CCDS" id="CCDS58495.1">
    <molecule id="Q6ZN54-3"/>
</dbReference>
<dbReference type="CCDS" id="CCDS58496.1">
    <molecule id="Q6ZN54-4"/>
</dbReference>
<dbReference type="RefSeq" id="NP_001229745.1">
    <molecule id="Q6ZN54-3"/>
    <property type="nucleotide sequence ID" value="NM_001242816.2"/>
</dbReference>
<dbReference type="RefSeq" id="NP_001229746.1">
    <molecule id="Q6ZN54-4"/>
    <property type="nucleotide sequence ID" value="NM_001242817.2"/>
</dbReference>
<dbReference type="RefSeq" id="NP_001229747.1">
    <molecule id="Q6ZN54-5"/>
    <property type="nucleotide sequence ID" value="NM_001242818.2"/>
</dbReference>
<dbReference type="RefSeq" id="NP_001229748.1">
    <molecule id="Q6ZN54-6"/>
    <property type="nucleotide sequence ID" value="NM_001242819.1"/>
</dbReference>
<dbReference type="RefSeq" id="NP_001229749.1">
    <molecule id="Q6ZN54-5"/>
    <property type="nucleotide sequence ID" value="NM_001242820.2"/>
</dbReference>
<dbReference type="RefSeq" id="NP_001229750.1">
    <molecule id="Q6ZN54-2"/>
    <property type="nucleotide sequence ID" value="NM_001242821.2"/>
</dbReference>
<dbReference type="RefSeq" id="NP_001229751.1">
    <molecule id="Q6ZN54-2"/>
    <property type="nucleotide sequence ID" value="NM_001242822.2"/>
</dbReference>
<dbReference type="RefSeq" id="NP_060172.1">
    <molecule id="Q6ZN54-2"/>
    <property type="nucleotide sequence ID" value="NM_017702.4"/>
</dbReference>
<dbReference type="RefSeq" id="NP_997397.1">
    <molecule id="Q6ZN54-1"/>
    <property type="nucleotide sequence ID" value="NM_207514.3"/>
</dbReference>
<dbReference type="RefSeq" id="XP_005256375.2">
    <molecule id="Q6ZN54-6"/>
    <property type="nucleotide sequence ID" value="XM_005256318.4"/>
</dbReference>
<dbReference type="RefSeq" id="XP_016878847.1">
    <molecule id="Q6ZN54-5"/>
    <property type="nucleotide sequence ID" value="XM_017023358.3"/>
</dbReference>
<dbReference type="RefSeq" id="XP_016878849.1">
    <molecule id="Q6ZN54-6"/>
    <property type="nucleotide sequence ID" value="XM_017023360.3"/>
</dbReference>
<dbReference type="RefSeq" id="XP_016878852.1">
    <molecule id="Q6ZN54-1"/>
    <property type="nucleotide sequence ID" value="XM_017023363.2"/>
</dbReference>
<dbReference type="RefSeq" id="XP_016878856.1">
    <molecule id="Q6ZN54-5"/>
    <property type="nucleotide sequence ID" value="XM_017023367.3"/>
</dbReference>
<dbReference type="RefSeq" id="XP_016878857.1">
    <property type="nucleotide sequence ID" value="XM_017023368.1"/>
</dbReference>
<dbReference type="RefSeq" id="XP_016878858.1">
    <molecule id="Q6ZN54-6"/>
    <property type="nucleotide sequence ID" value="XM_017023369.3"/>
</dbReference>
<dbReference type="RefSeq" id="XP_054236532.1">
    <molecule id="Q6ZN54-5"/>
    <property type="nucleotide sequence ID" value="XM_054380557.1"/>
</dbReference>
<dbReference type="RefSeq" id="XP_054236535.1">
    <molecule id="Q6ZN54-6"/>
    <property type="nucleotide sequence ID" value="XM_054380560.1"/>
</dbReference>
<dbReference type="RefSeq" id="XP_054236536.1">
    <molecule id="Q6ZN54-6"/>
    <property type="nucleotide sequence ID" value="XM_054380561.1"/>
</dbReference>
<dbReference type="RefSeq" id="XP_054236542.1">
    <molecule id="Q6ZN54-1"/>
    <property type="nucleotide sequence ID" value="XM_054380567.1"/>
</dbReference>
<dbReference type="RefSeq" id="XP_054236548.1">
    <molecule id="Q6ZN54-5"/>
    <property type="nucleotide sequence ID" value="XM_054380573.1"/>
</dbReference>
<dbReference type="RefSeq" id="XP_054236550.1">
    <molecule id="Q6ZN54-6"/>
    <property type="nucleotide sequence ID" value="XM_054380575.1"/>
</dbReference>
<dbReference type="SMR" id="Q6ZN54"/>
<dbReference type="BioGRID" id="120199">
    <property type="interactions" value="60"/>
</dbReference>
<dbReference type="FunCoup" id="Q6ZN54">
    <property type="interactions" value="182"/>
</dbReference>
<dbReference type="IntAct" id="Q6ZN54">
    <property type="interactions" value="47"/>
</dbReference>
<dbReference type="MINT" id="Q6ZN54"/>
<dbReference type="STRING" id="9606.ENSP00000268676"/>
<dbReference type="iPTMnet" id="Q6ZN54"/>
<dbReference type="PhosphoSitePlus" id="Q6ZN54"/>
<dbReference type="BioMuta" id="DEF8"/>
<dbReference type="DMDM" id="239938619"/>
<dbReference type="jPOST" id="Q6ZN54"/>
<dbReference type="MassIVE" id="Q6ZN54"/>
<dbReference type="PaxDb" id="9606-ENSP00000268676"/>
<dbReference type="PeptideAtlas" id="Q6ZN54"/>
<dbReference type="ProteomicsDB" id="42925"/>
<dbReference type="ProteomicsDB" id="67977">
    <molecule id="Q6ZN54-1"/>
</dbReference>
<dbReference type="ProteomicsDB" id="67978">
    <molecule id="Q6ZN54-2"/>
</dbReference>
<dbReference type="ProteomicsDB" id="67979">
    <molecule id="Q6ZN54-3"/>
</dbReference>
<dbReference type="ProteomicsDB" id="67980">
    <molecule id="Q6ZN54-4"/>
</dbReference>
<dbReference type="ProteomicsDB" id="67981">
    <molecule id="Q6ZN54-5"/>
</dbReference>
<dbReference type="Antibodypedia" id="57197">
    <property type="antibodies" value="164 antibodies from 17 providers"/>
</dbReference>
<dbReference type="DNASU" id="54849"/>
<dbReference type="Ensembl" id="ENST00000268676.11">
    <molecule id="Q6ZN54-1"/>
    <property type="protein sequence ID" value="ENSP00000268676.7"/>
    <property type="gene ID" value="ENSG00000140995.17"/>
</dbReference>
<dbReference type="Ensembl" id="ENST00000418391.6">
    <molecule id="Q6ZN54-2"/>
    <property type="protein sequence ID" value="ENSP00000412784.2"/>
    <property type="gene ID" value="ENSG00000140995.17"/>
</dbReference>
<dbReference type="Ensembl" id="ENST00000563594.6">
    <molecule id="Q6ZN54-5"/>
    <property type="protein sequence ID" value="ENSP00000458019.1"/>
    <property type="gene ID" value="ENSG00000140995.17"/>
</dbReference>
<dbReference type="Ensembl" id="ENST00000563795.1">
    <molecule id="Q6ZN54-6"/>
    <property type="protein sequence ID" value="ENSP00000457627.1"/>
    <property type="gene ID" value="ENSG00000140995.17"/>
</dbReference>
<dbReference type="Ensembl" id="ENST00000567874.5">
    <molecule id="Q6ZN54-4"/>
    <property type="protein sequence ID" value="ENSP00000456095.1"/>
    <property type="gene ID" value="ENSG00000140995.17"/>
</dbReference>
<dbReference type="Ensembl" id="ENST00000569453.5">
    <molecule id="Q6ZN54-5"/>
    <property type="protein sequence ID" value="ENSP00000456501.1"/>
    <property type="gene ID" value="ENSG00000140995.17"/>
</dbReference>
<dbReference type="Ensembl" id="ENST00000570182.5">
    <molecule id="Q6ZN54-3"/>
    <property type="protein sequence ID" value="ENSP00000456799.1"/>
    <property type="gene ID" value="ENSG00000140995.17"/>
</dbReference>
<dbReference type="Ensembl" id="ENST00000610455.4">
    <molecule id="Q6ZN54-2"/>
    <property type="protein sequence ID" value="ENSP00000480073.1"/>
    <property type="gene ID" value="ENSG00000140995.17"/>
</dbReference>
<dbReference type="Ensembl" id="ENST00000617948.4">
    <molecule id="Q6ZN54-5"/>
    <property type="protein sequence ID" value="ENSP00000482524.1"/>
    <property type="gene ID" value="ENSG00000140995.17"/>
</dbReference>
<dbReference type="GeneID" id="54849"/>
<dbReference type="KEGG" id="hsa:54849"/>
<dbReference type="MANE-Select" id="ENST00000563594.6">
    <molecule id="Q6ZN54-5"/>
    <property type="protein sequence ID" value="ENSP00000458019.1"/>
    <property type="RefSeq nucleotide sequence ID" value="NM_001242818.2"/>
    <property type="RefSeq protein sequence ID" value="NP_001229747.1"/>
</dbReference>
<dbReference type="UCSC" id="uc002fpl.4">
    <molecule id="Q6ZN54-1"/>
    <property type="organism name" value="human"/>
</dbReference>
<dbReference type="AGR" id="HGNC:25969"/>
<dbReference type="CTD" id="54849"/>
<dbReference type="DisGeNET" id="54849"/>
<dbReference type="GeneCards" id="DEF8"/>
<dbReference type="HGNC" id="HGNC:25969">
    <property type="gene designation" value="DEF8"/>
</dbReference>
<dbReference type="HPA" id="ENSG00000140995">
    <property type="expression patterns" value="Low tissue specificity"/>
</dbReference>
<dbReference type="neXtProt" id="NX_Q6ZN54"/>
<dbReference type="OpenTargets" id="ENSG00000140995"/>
<dbReference type="PharmGKB" id="PA162383526"/>
<dbReference type="VEuPathDB" id="HostDB:ENSG00000140995"/>
<dbReference type="eggNOG" id="KOG1829">
    <property type="taxonomic scope" value="Eukaryota"/>
</dbReference>
<dbReference type="GeneTree" id="ENSGT00940000159182"/>
<dbReference type="HOGENOM" id="CLU_034500_3_0_1"/>
<dbReference type="InParanoid" id="Q6ZN54"/>
<dbReference type="OMA" id="NMICPKC"/>
<dbReference type="OrthoDB" id="1918044at2759"/>
<dbReference type="PAN-GO" id="Q6ZN54">
    <property type="GO annotations" value="0 GO annotations based on evolutionary models"/>
</dbReference>
<dbReference type="PhylomeDB" id="Q6ZN54"/>
<dbReference type="TreeFam" id="TF317067"/>
<dbReference type="PathwayCommons" id="Q6ZN54"/>
<dbReference type="SignaLink" id="Q6ZN54"/>
<dbReference type="BioGRID-ORCS" id="54849">
    <property type="hits" value="32 hits in 1154 CRISPR screens"/>
</dbReference>
<dbReference type="ChiTaRS" id="DEF8">
    <property type="organism name" value="human"/>
</dbReference>
<dbReference type="GenomeRNAi" id="54849"/>
<dbReference type="Pharos" id="Q6ZN54">
    <property type="development level" value="Tbio"/>
</dbReference>
<dbReference type="PRO" id="PR:Q6ZN54"/>
<dbReference type="Proteomes" id="UP000005640">
    <property type="component" value="Chromosome 16"/>
</dbReference>
<dbReference type="RNAct" id="Q6ZN54">
    <property type="molecule type" value="protein"/>
</dbReference>
<dbReference type="Bgee" id="ENSG00000140995">
    <property type="expression patterns" value="Expressed in right hemisphere of cerebellum and 186 other cell types or tissues"/>
</dbReference>
<dbReference type="ExpressionAtlas" id="Q6ZN54">
    <property type="expression patterns" value="baseline and differential"/>
</dbReference>
<dbReference type="GO" id="GO:0008270">
    <property type="term" value="F:zinc ion binding"/>
    <property type="evidence" value="ECO:0007669"/>
    <property type="project" value="UniProtKB-KW"/>
</dbReference>
<dbReference type="GO" id="GO:0032418">
    <property type="term" value="P:lysosome localization"/>
    <property type="evidence" value="ECO:0000250"/>
    <property type="project" value="UniProtKB"/>
</dbReference>
<dbReference type="GO" id="GO:0045780">
    <property type="term" value="P:positive regulation of bone resorption"/>
    <property type="evidence" value="ECO:0000250"/>
    <property type="project" value="UniProtKB"/>
</dbReference>
<dbReference type="GO" id="GO:1900029">
    <property type="term" value="P:positive regulation of ruffle assembly"/>
    <property type="evidence" value="ECO:0000250"/>
    <property type="project" value="UniProtKB"/>
</dbReference>
<dbReference type="CDD" id="cd20819">
    <property type="entry name" value="C1_DEF8"/>
    <property type="match status" value="1"/>
</dbReference>
<dbReference type="FunFam" id="3.30.60.20:FF:000042">
    <property type="entry name" value="differentially expressed in FDCP 8 homolog isoform X2"/>
    <property type="match status" value="1"/>
</dbReference>
<dbReference type="Gene3D" id="3.30.60.20">
    <property type="match status" value="1"/>
</dbReference>
<dbReference type="InterPro" id="IPR046349">
    <property type="entry name" value="C1-like_sf"/>
</dbReference>
<dbReference type="InterPro" id="IPR051366">
    <property type="entry name" value="DEF8"/>
</dbReference>
<dbReference type="InterPro" id="IPR047983">
    <property type="entry name" value="DEF8_C1"/>
</dbReference>
<dbReference type="InterPro" id="IPR002219">
    <property type="entry name" value="PE/DAG-bd"/>
</dbReference>
<dbReference type="InterPro" id="IPR025258">
    <property type="entry name" value="RH_dom"/>
</dbReference>
<dbReference type="PANTHER" id="PTHR12326:SF3">
    <property type="entry name" value="DIFFERENTIALLY EXPRESSED IN FDCP 8 HOMOLOG"/>
    <property type="match status" value="1"/>
</dbReference>
<dbReference type="PANTHER" id="PTHR12326">
    <property type="entry name" value="PLECKSTRIN HOMOLOGY DOMAIN CONTAINING PROTEIN"/>
    <property type="match status" value="1"/>
</dbReference>
<dbReference type="Pfam" id="PF00130">
    <property type="entry name" value="C1_1"/>
    <property type="match status" value="1"/>
</dbReference>
<dbReference type="Pfam" id="PF13901">
    <property type="entry name" value="RH_dom"/>
    <property type="match status" value="1"/>
</dbReference>
<dbReference type="SMART" id="SM00109">
    <property type="entry name" value="C1"/>
    <property type="match status" value="2"/>
</dbReference>
<dbReference type="SMART" id="SM01175">
    <property type="entry name" value="DUF4206"/>
    <property type="match status" value="1"/>
</dbReference>
<dbReference type="SUPFAM" id="SSF57889">
    <property type="entry name" value="Cysteine-rich domain"/>
    <property type="match status" value="1"/>
</dbReference>
<dbReference type="PROSITE" id="PS00479">
    <property type="entry name" value="ZF_DAG_PE_1"/>
    <property type="match status" value="1"/>
</dbReference>
<dbReference type="PROSITE" id="PS50081">
    <property type="entry name" value="ZF_DAG_PE_2"/>
    <property type="match status" value="1"/>
</dbReference>
<comment type="function">
    <text evidence="1">Positively regulates lysosome peripheral distribution and ruffled border formation in osteoclasts. Involved in bone resorption.</text>
</comment>
<comment type="subunit">
    <text evidence="1">Interacts (via C-terminus) with PLEKHM1; this interaction is weak but increased in a RAB7A-dependent manner.</text>
</comment>
<comment type="interaction">
    <interactant intactId="EBI-12346463">
        <id>Q6ZN54-2</id>
    </interactant>
    <interactant intactId="EBI-348399">
        <id>P22607</id>
        <label>FGFR3</label>
    </interactant>
    <organismsDiffer>false</organismsDiffer>
    <experiments>3</experiments>
</comment>
<comment type="interaction">
    <interactant intactId="EBI-12346463">
        <id>Q6ZN54-2</id>
    </interactant>
    <interactant intactId="EBI-8285963">
        <id>Q14957</id>
        <label>GRIN2C</label>
    </interactant>
    <organismsDiffer>false</organismsDiffer>
    <experiments>3</experiments>
</comment>
<comment type="interaction">
    <interactant intactId="EBI-12346463">
        <id>Q6ZN54-2</id>
    </interactant>
    <interactant intactId="EBI-16439278">
        <id>Q6FHY5</id>
        <label>MEOX2</label>
    </interactant>
    <organismsDiffer>false</organismsDiffer>
    <experiments>3</experiments>
</comment>
<comment type="interaction">
    <interactant intactId="EBI-12346463">
        <id>Q6ZN54-2</id>
    </interactant>
    <interactant intactId="EBI-740727">
        <id>Q8TAU3</id>
        <label>ZNF417</label>
    </interactant>
    <organismsDiffer>false</organismsDiffer>
    <experiments>3</experiments>
</comment>
<comment type="interaction">
    <interactant intactId="EBI-12346463">
        <id>Q6ZN54-2</id>
    </interactant>
    <interactant intactId="EBI-6427977">
        <id>Q96SQ5</id>
        <label>ZNF587</label>
    </interactant>
    <organismsDiffer>false</organismsDiffer>
    <experiments>3</experiments>
</comment>
<comment type="alternative products">
    <event type="alternative splicing"/>
    <isoform>
        <id>Q6ZN54-1</id>
        <name>1</name>
        <sequence type="displayed"/>
    </isoform>
    <isoform>
        <id>Q6ZN54-2</id>
        <name>2</name>
        <sequence type="described" ref="VSP_031821 VSP_031823 VSP_031824"/>
    </isoform>
    <isoform>
        <id>Q6ZN54-3</id>
        <name>3</name>
        <sequence type="described" ref="VSP_031821 VSP_031822"/>
    </isoform>
    <isoform>
        <id>Q6ZN54-4</id>
        <name>4</name>
        <sequence type="described" ref="VSP_037523"/>
    </isoform>
    <isoform>
        <id>Q6ZN54-5</id>
        <name>5</name>
        <sequence type="described" ref="VSP_031821"/>
    </isoform>
    <isoform>
        <id>Q6ZN54-6</id>
        <name>6</name>
        <sequence type="described" ref="VSP_031821 VSP_047179"/>
    </isoform>
</comment>
<comment type="similarity">
    <text evidence="6">Belongs to the DEF8 family.</text>
</comment>
<comment type="sequence caution" evidence="6">
    <conflict type="miscellaneous discrepancy">
        <sequence resource="EMBL-CDS" id="BAC04802"/>
    </conflict>
    <text>Unlikely isoform. Aberrant splice sites.</text>
</comment>
<comment type="sequence caution" evidence="6">
    <conflict type="miscellaneous discrepancy">
        <sequence resource="EMBL-CDS" id="BAG64541"/>
    </conflict>
    <text>Unlikely isoform. Aberrant splice sites.</text>
</comment>
<name>DEFI8_HUMAN</name>
<proteinExistence type="evidence at protein level"/>
<evidence type="ECO:0000250" key="1">
    <source>
        <dbReference type="UniProtKB" id="Q99J78"/>
    </source>
</evidence>
<evidence type="ECO:0000255" key="2">
    <source>
        <dbReference type="PROSITE-ProRule" id="PRU00226"/>
    </source>
</evidence>
<evidence type="ECO:0000256" key="3">
    <source>
        <dbReference type="SAM" id="MobiDB-lite"/>
    </source>
</evidence>
<evidence type="ECO:0000303" key="4">
    <source>
    </source>
</evidence>
<evidence type="ECO:0000303" key="5">
    <source>
    </source>
</evidence>
<evidence type="ECO:0000305" key="6"/>
<evidence type="ECO:0007744" key="7">
    <source>
    </source>
</evidence>
<feature type="chain" id="PRO_0000321913" description="Differentially expressed in FDCP 8 homolog">
    <location>
        <begin position="1"/>
        <end position="512"/>
    </location>
</feature>
<feature type="zinc finger region" description="Phorbol-ester/DAG-type 1" evidence="2">
    <location>
        <begin position="199"/>
        <end position="250"/>
    </location>
</feature>
<feature type="zinc finger region" description="Phorbol-ester/DAG-type 2" evidence="2">
    <location>
        <begin position="429"/>
        <end position="489"/>
    </location>
</feature>
<feature type="region of interest" description="Disordered" evidence="3">
    <location>
        <begin position="77"/>
        <end position="116"/>
    </location>
</feature>
<feature type="compositionally biased region" description="Acidic residues" evidence="3">
    <location>
        <begin position="95"/>
        <end position="105"/>
    </location>
</feature>
<feature type="modified residue" description="Phosphoserine" evidence="1">
    <location>
        <position position="501"/>
    </location>
</feature>
<feature type="splice variant" id="VSP_037523" description="In isoform 4." evidence="4">
    <location>
        <begin position="1"/>
        <end position="121"/>
    </location>
</feature>
<feature type="splice variant" id="VSP_031821" description="In isoform 2, isoform 3, isoform 5 and isoform 6." evidence="4 5">
    <location>
        <begin position="1"/>
        <end position="61"/>
    </location>
</feature>
<feature type="splice variant" id="VSP_031822" description="In isoform 3." evidence="4">
    <location>
        <begin position="136"/>
        <end position="145"/>
    </location>
</feature>
<feature type="splice variant" id="VSP_031823" description="In isoform 2." evidence="4 5">
    <original>CYYRCHSKCLNLISKPCVSSKVSHQ</original>
    <variation>GPRPRRGVRNERDQSSCLRWAHIQM</variation>
    <location>
        <begin position="234"/>
        <end position="258"/>
    </location>
</feature>
<feature type="splice variant" id="VSP_031824" description="In isoform 2." evidence="4 5">
    <location>
        <begin position="259"/>
        <end position="512"/>
    </location>
</feature>
<feature type="splice variant" id="VSP_047179" description="In isoform 6." evidence="6">
    <location>
        <begin position="395"/>
        <end position="411"/>
    </location>
</feature>
<feature type="sequence variant" id="VAR_061485" description="In dbSNP:rs7194844.">
    <original>Q</original>
    <variation>E</variation>
    <location>
        <position position="90"/>
    </location>
</feature>
<feature type="sequence conflict" description="In Ref. 1; BAD18521." evidence="6" ref="1">
    <original>A</original>
    <variation>V</variation>
    <location>
        <position position="283"/>
    </location>
</feature>
<feature type="sequence conflict" description="In Ref. 1; BAG52977." evidence="6" ref="1">
    <original>E</original>
    <variation>A</variation>
    <location>
        <position position="293"/>
    </location>
</feature>
<feature type="modified residue" description="N-acetylmethionine" evidence="7">
    <location sequence="Q6ZN54-2">
        <position position="1"/>
    </location>
</feature>
<feature type="modified residue" description="N-acetylmethionine" evidence="7">
    <location sequence="Q6ZN54-3">
        <position position="1"/>
    </location>
</feature>
<feature type="modified residue" description="N-acetylmethionine" evidence="7">
    <location sequence="Q6ZN54-5">
        <position position="1"/>
    </location>
</feature>
<feature type="modified residue" description="N-acetylmethionine" evidence="7">
    <location sequence="Q6ZN54-6">
        <position position="1"/>
    </location>
</feature>